<comment type="function">
    <text evidence="1">May play a role in DNA repair. It seems to be involved in an RecBC-independent recombinational process of DNA repair. It may act with RecF and RecO.</text>
</comment>
<comment type="similarity">
    <text evidence="1">Belongs to the RecR family.</text>
</comment>
<sequence length="199" mass="21158">MKFSPLVDELIQSLKCLPGVGPKSAQRMAFQLLERDRKAGSKLADSLGKAMSEVGHCQSCRTFTEETYCPICVSTKRGHSSVICVVETPADVLAIEAGGHFSGRYFVLLGHLSPLDGVGPDELGLALLETHLASGEVTELILATNPTVEGDATAHYIADMAKNHELAVSRIAHGVPVGGELEYVDSTTLALSFNGRLPI</sequence>
<name>RECR_SHEPW</name>
<protein>
    <recommendedName>
        <fullName evidence="1">Recombination protein RecR</fullName>
    </recommendedName>
</protein>
<evidence type="ECO:0000255" key="1">
    <source>
        <dbReference type="HAMAP-Rule" id="MF_00017"/>
    </source>
</evidence>
<gene>
    <name evidence="1" type="primary">recR</name>
    <name type="ordered locus">swp_1731</name>
</gene>
<proteinExistence type="inferred from homology"/>
<dbReference type="EMBL" id="CP000472">
    <property type="protein sequence ID" value="ACJ28502.1"/>
    <property type="molecule type" value="Genomic_DNA"/>
</dbReference>
<dbReference type="RefSeq" id="WP_020911880.1">
    <property type="nucleotide sequence ID" value="NC_011566.1"/>
</dbReference>
<dbReference type="SMR" id="B8CN00"/>
<dbReference type="STRING" id="225849.swp_1731"/>
<dbReference type="KEGG" id="swp:swp_1731"/>
<dbReference type="eggNOG" id="COG0353">
    <property type="taxonomic scope" value="Bacteria"/>
</dbReference>
<dbReference type="HOGENOM" id="CLU_060739_1_2_6"/>
<dbReference type="OrthoDB" id="9802672at2"/>
<dbReference type="Proteomes" id="UP000000753">
    <property type="component" value="Chromosome"/>
</dbReference>
<dbReference type="GO" id="GO:0003677">
    <property type="term" value="F:DNA binding"/>
    <property type="evidence" value="ECO:0007669"/>
    <property type="project" value="UniProtKB-UniRule"/>
</dbReference>
<dbReference type="GO" id="GO:0008270">
    <property type="term" value="F:zinc ion binding"/>
    <property type="evidence" value="ECO:0007669"/>
    <property type="project" value="UniProtKB-KW"/>
</dbReference>
<dbReference type="GO" id="GO:0006310">
    <property type="term" value="P:DNA recombination"/>
    <property type="evidence" value="ECO:0007669"/>
    <property type="project" value="UniProtKB-UniRule"/>
</dbReference>
<dbReference type="GO" id="GO:0006281">
    <property type="term" value="P:DNA repair"/>
    <property type="evidence" value="ECO:0007669"/>
    <property type="project" value="UniProtKB-UniRule"/>
</dbReference>
<dbReference type="CDD" id="cd01025">
    <property type="entry name" value="TOPRIM_recR"/>
    <property type="match status" value="1"/>
</dbReference>
<dbReference type="FunFam" id="3.40.1360.10:FF:000001">
    <property type="entry name" value="Recombination protein RecR"/>
    <property type="match status" value="1"/>
</dbReference>
<dbReference type="Gene3D" id="3.40.1360.10">
    <property type="match status" value="1"/>
</dbReference>
<dbReference type="Gene3D" id="6.10.250.240">
    <property type="match status" value="1"/>
</dbReference>
<dbReference type="Gene3D" id="1.10.8.420">
    <property type="entry name" value="RecR Domain 1"/>
    <property type="match status" value="1"/>
</dbReference>
<dbReference type="HAMAP" id="MF_00017">
    <property type="entry name" value="RecR"/>
    <property type="match status" value="1"/>
</dbReference>
<dbReference type="InterPro" id="IPR000093">
    <property type="entry name" value="DNA_Rcmb_RecR"/>
</dbReference>
<dbReference type="InterPro" id="IPR023627">
    <property type="entry name" value="Rcmb_RecR"/>
</dbReference>
<dbReference type="InterPro" id="IPR015967">
    <property type="entry name" value="Rcmb_RecR_Znf"/>
</dbReference>
<dbReference type="InterPro" id="IPR006171">
    <property type="entry name" value="TOPRIM_dom"/>
</dbReference>
<dbReference type="InterPro" id="IPR034137">
    <property type="entry name" value="TOPRIM_RecR"/>
</dbReference>
<dbReference type="NCBIfam" id="TIGR00615">
    <property type="entry name" value="recR"/>
    <property type="match status" value="1"/>
</dbReference>
<dbReference type="PANTHER" id="PTHR30446">
    <property type="entry name" value="RECOMBINATION PROTEIN RECR"/>
    <property type="match status" value="1"/>
</dbReference>
<dbReference type="PANTHER" id="PTHR30446:SF0">
    <property type="entry name" value="RECOMBINATION PROTEIN RECR"/>
    <property type="match status" value="1"/>
</dbReference>
<dbReference type="Pfam" id="PF21175">
    <property type="entry name" value="RecR_C"/>
    <property type="match status" value="1"/>
</dbReference>
<dbReference type="Pfam" id="PF21176">
    <property type="entry name" value="RecR_HhH"/>
    <property type="match status" value="1"/>
</dbReference>
<dbReference type="Pfam" id="PF02132">
    <property type="entry name" value="RecR_ZnF"/>
    <property type="match status" value="1"/>
</dbReference>
<dbReference type="Pfam" id="PF13662">
    <property type="entry name" value="Toprim_4"/>
    <property type="match status" value="1"/>
</dbReference>
<dbReference type="SMART" id="SM00493">
    <property type="entry name" value="TOPRIM"/>
    <property type="match status" value="1"/>
</dbReference>
<dbReference type="SUPFAM" id="SSF111304">
    <property type="entry name" value="Recombination protein RecR"/>
    <property type="match status" value="1"/>
</dbReference>
<dbReference type="PROSITE" id="PS50880">
    <property type="entry name" value="TOPRIM"/>
    <property type="match status" value="1"/>
</dbReference>
<keyword id="KW-0227">DNA damage</keyword>
<keyword id="KW-0233">DNA recombination</keyword>
<keyword id="KW-0234">DNA repair</keyword>
<keyword id="KW-0479">Metal-binding</keyword>
<keyword id="KW-0862">Zinc</keyword>
<keyword id="KW-0863">Zinc-finger</keyword>
<organism>
    <name type="scientific">Shewanella piezotolerans (strain WP3 / JCM 13877)</name>
    <dbReference type="NCBI Taxonomy" id="225849"/>
    <lineage>
        <taxon>Bacteria</taxon>
        <taxon>Pseudomonadati</taxon>
        <taxon>Pseudomonadota</taxon>
        <taxon>Gammaproteobacteria</taxon>
        <taxon>Alteromonadales</taxon>
        <taxon>Shewanellaceae</taxon>
        <taxon>Shewanella</taxon>
    </lineage>
</organism>
<accession>B8CN00</accession>
<reference key="1">
    <citation type="journal article" date="2008" name="PLoS ONE">
        <title>Environmental adaptation: genomic analysis of the piezotolerant and psychrotolerant deep-sea iron reducing bacterium Shewanella piezotolerans WP3.</title>
        <authorList>
            <person name="Wang F."/>
            <person name="Wang J."/>
            <person name="Jian H."/>
            <person name="Zhang B."/>
            <person name="Li S."/>
            <person name="Wang F."/>
            <person name="Zeng X."/>
            <person name="Gao L."/>
            <person name="Bartlett D.H."/>
            <person name="Yu J."/>
            <person name="Hu S."/>
            <person name="Xiao X."/>
        </authorList>
    </citation>
    <scope>NUCLEOTIDE SEQUENCE [LARGE SCALE GENOMIC DNA]</scope>
    <source>
        <strain>WP3 / JCM 13877</strain>
    </source>
</reference>
<feature type="chain" id="PRO_1000195408" description="Recombination protein RecR">
    <location>
        <begin position="1"/>
        <end position="199"/>
    </location>
</feature>
<feature type="domain" description="Toprim" evidence="1">
    <location>
        <begin position="81"/>
        <end position="176"/>
    </location>
</feature>
<feature type="zinc finger region" description="C4-type" evidence="1">
    <location>
        <begin position="57"/>
        <end position="72"/>
    </location>
</feature>